<keyword id="KW-0496">Mitochondrion</keyword>
<keyword id="KW-1185">Reference proteome</keyword>
<keyword id="KW-0687">Ribonucleoprotein</keyword>
<keyword id="KW-0689">Ribosomal protein</keyword>
<keyword id="KW-0809">Transit peptide</keyword>
<organism>
    <name type="scientific">Neosartorya fischeri (strain ATCC 1020 / DSM 3700 / CBS 544.65 / FGSC A1164 / JCM 1740 / NRRL 181 / WB 181)</name>
    <name type="common">Aspergillus fischerianus</name>
    <dbReference type="NCBI Taxonomy" id="331117"/>
    <lineage>
        <taxon>Eukaryota</taxon>
        <taxon>Fungi</taxon>
        <taxon>Dikarya</taxon>
        <taxon>Ascomycota</taxon>
        <taxon>Pezizomycotina</taxon>
        <taxon>Eurotiomycetes</taxon>
        <taxon>Eurotiomycetidae</taxon>
        <taxon>Eurotiales</taxon>
        <taxon>Aspergillaceae</taxon>
        <taxon>Aspergillus</taxon>
        <taxon>Aspergillus subgen. Fumigati</taxon>
    </lineage>
</organism>
<name>RM04_NEOFI</name>
<gene>
    <name type="primary">mrpl4</name>
    <name type="ORF">NFIA_086430</name>
</gene>
<feature type="transit peptide" description="Mitochondrion" evidence="2">
    <location>
        <begin position="1"/>
        <end status="unknown"/>
    </location>
</feature>
<feature type="chain" id="PRO_0000372406" description="Large ribosomal subunit protein uL29m">
    <location>
        <begin status="unknown"/>
        <end position="217"/>
    </location>
</feature>
<comment type="subunit">
    <text evidence="1">Component of the mitochondrial large ribosomal subunit. Mature mitochondrial ribosomes consist of a small (37S) and a large (54S) subunit. The 37S subunit contains at least 33 different proteins and 1 molecule of RNA (15S). The 54S subunit contains at least 45 different proteins and 1 molecule of RNA (21S) (By similarity).</text>
</comment>
<comment type="subcellular location">
    <subcellularLocation>
        <location evidence="1">Mitochondrion</location>
    </subcellularLocation>
</comment>
<comment type="similarity">
    <text evidence="3">Belongs to the universal ribosomal protein uL29 family.</text>
</comment>
<reference key="1">
    <citation type="journal article" date="2008" name="PLoS Genet.">
        <title>Genomic islands in the pathogenic filamentous fungus Aspergillus fumigatus.</title>
        <authorList>
            <person name="Fedorova N.D."/>
            <person name="Khaldi N."/>
            <person name="Joardar V.S."/>
            <person name="Maiti R."/>
            <person name="Amedeo P."/>
            <person name="Anderson M.J."/>
            <person name="Crabtree J."/>
            <person name="Silva J.C."/>
            <person name="Badger J.H."/>
            <person name="Albarraq A."/>
            <person name="Angiuoli S."/>
            <person name="Bussey H."/>
            <person name="Bowyer P."/>
            <person name="Cotty P.J."/>
            <person name="Dyer P.S."/>
            <person name="Egan A."/>
            <person name="Galens K."/>
            <person name="Fraser-Liggett C.M."/>
            <person name="Haas B.J."/>
            <person name="Inman J.M."/>
            <person name="Kent R."/>
            <person name="Lemieux S."/>
            <person name="Malavazi I."/>
            <person name="Orvis J."/>
            <person name="Roemer T."/>
            <person name="Ronning C.M."/>
            <person name="Sundaram J.P."/>
            <person name="Sutton G."/>
            <person name="Turner G."/>
            <person name="Venter J.C."/>
            <person name="White O.R."/>
            <person name="Whitty B.R."/>
            <person name="Youngman P."/>
            <person name="Wolfe K.H."/>
            <person name="Goldman G.H."/>
            <person name="Wortman J.R."/>
            <person name="Jiang B."/>
            <person name="Denning D.W."/>
            <person name="Nierman W.C."/>
        </authorList>
    </citation>
    <scope>NUCLEOTIDE SEQUENCE [LARGE SCALE GENOMIC DNA]</scope>
    <source>
        <strain>ATCC 1020 / DSM 3700 / CBS 544.65 / FGSC A1164 / JCM 1740 / NRRL 181 / WB 181</strain>
    </source>
</reference>
<sequence>MHLQSVARLTRQCHGLPLVELPPPYLAPSLHFSLIRTPVQCSSFSSTAVVGGRGRDLNKTRGVSAIHRTGPRFKLGVSKYPLPKPVSPAALEKREATPDHGLWGFFPRDRSALSTPEYDVAHGRSWSIQELREKSWEDLHCLWWVCVKERNRIATSNLERQRLKAGYGEWEASERDRTIRVTQNGIKHVLRERWYAWEDAKRLYKNGYRPQDEENQE</sequence>
<proteinExistence type="inferred from homology"/>
<dbReference type="EMBL" id="DS027696">
    <property type="protein sequence ID" value="EAW18688.1"/>
    <property type="molecule type" value="Genomic_DNA"/>
</dbReference>
<dbReference type="RefSeq" id="XP_001260585.1">
    <property type="nucleotide sequence ID" value="XM_001260584.1"/>
</dbReference>
<dbReference type="SMR" id="A1DH31"/>
<dbReference type="STRING" id="331117.A1DH31"/>
<dbReference type="EnsemblFungi" id="EAW18688">
    <property type="protein sequence ID" value="EAW18688"/>
    <property type="gene ID" value="NFIA_086430"/>
</dbReference>
<dbReference type="GeneID" id="4587143"/>
<dbReference type="KEGG" id="nfi:NFIA_086430"/>
<dbReference type="VEuPathDB" id="FungiDB:NFIA_086430"/>
<dbReference type="eggNOG" id="KOG3331">
    <property type="taxonomic scope" value="Eukaryota"/>
</dbReference>
<dbReference type="HOGENOM" id="CLU_063281_0_0_1"/>
<dbReference type="OMA" id="YAHGRAW"/>
<dbReference type="OrthoDB" id="270763at2759"/>
<dbReference type="Proteomes" id="UP000006702">
    <property type="component" value="Unassembled WGS sequence"/>
</dbReference>
<dbReference type="GO" id="GO:0005762">
    <property type="term" value="C:mitochondrial large ribosomal subunit"/>
    <property type="evidence" value="ECO:0007669"/>
    <property type="project" value="TreeGrafter"/>
</dbReference>
<dbReference type="GO" id="GO:0003735">
    <property type="term" value="F:structural constituent of ribosome"/>
    <property type="evidence" value="ECO:0007669"/>
    <property type="project" value="InterPro"/>
</dbReference>
<dbReference type="GO" id="GO:0032543">
    <property type="term" value="P:mitochondrial translation"/>
    <property type="evidence" value="ECO:0007669"/>
    <property type="project" value="TreeGrafter"/>
</dbReference>
<dbReference type="Gene3D" id="6.10.330.20">
    <property type="match status" value="1"/>
</dbReference>
<dbReference type="InterPro" id="IPR038340">
    <property type="entry name" value="MRP-L47_sf"/>
</dbReference>
<dbReference type="InterPro" id="IPR010729">
    <property type="entry name" value="Ribosomal_uL29_mit"/>
</dbReference>
<dbReference type="PANTHER" id="PTHR21183:SF18">
    <property type="entry name" value="LARGE RIBOSOMAL SUBUNIT PROTEIN UL29M"/>
    <property type="match status" value="1"/>
</dbReference>
<dbReference type="PANTHER" id="PTHR21183">
    <property type="entry name" value="RIBOSOMAL PROTEIN L47, MITOCHONDRIAL-RELATED"/>
    <property type="match status" value="1"/>
</dbReference>
<dbReference type="Pfam" id="PF06984">
    <property type="entry name" value="MRP-L47"/>
    <property type="match status" value="1"/>
</dbReference>
<protein>
    <recommendedName>
        <fullName evidence="3">Large ribosomal subunit protein uL29m</fullName>
    </recommendedName>
    <alternativeName>
        <fullName>54S ribosomal protein L4, mitochondrial</fullName>
    </alternativeName>
</protein>
<evidence type="ECO:0000250" key="1"/>
<evidence type="ECO:0000255" key="2"/>
<evidence type="ECO:0000305" key="3"/>
<accession>A1DH31</accession>